<comment type="function">
    <text evidence="1">Catalyzes the last two sequential reactions in the de novo biosynthetic pathway for UDP-N-acetylglucosamine (UDP-GlcNAc). The C-terminal domain catalyzes the transfer of acetyl group from acetyl coenzyme A to glucosamine-1-phosphate (GlcN-1-P) to produce N-acetylglucosamine-1-phosphate (GlcNAc-1-P), which is converted into UDP-GlcNAc by the transfer of uridine 5-monophosphate (from uridine 5-triphosphate), a reaction catalyzed by the N-terminal domain.</text>
</comment>
<comment type="catalytic activity">
    <reaction evidence="1">
        <text>alpha-D-glucosamine 1-phosphate + acetyl-CoA = N-acetyl-alpha-D-glucosamine 1-phosphate + CoA + H(+)</text>
        <dbReference type="Rhea" id="RHEA:13725"/>
        <dbReference type="ChEBI" id="CHEBI:15378"/>
        <dbReference type="ChEBI" id="CHEBI:57287"/>
        <dbReference type="ChEBI" id="CHEBI:57288"/>
        <dbReference type="ChEBI" id="CHEBI:57776"/>
        <dbReference type="ChEBI" id="CHEBI:58516"/>
        <dbReference type="EC" id="2.3.1.157"/>
    </reaction>
</comment>
<comment type="catalytic activity">
    <reaction evidence="1">
        <text>N-acetyl-alpha-D-glucosamine 1-phosphate + UTP + H(+) = UDP-N-acetyl-alpha-D-glucosamine + diphosphate</text>
        <dbReference type="Rhea" id="RHEA:13509"/>
        <dbReference type="ChEBI" id="CHEBI:15378"/>
        <dbReference type="ChEBI" id="CHEBI:33019"/>
        <dbReference type="ChEBI" id="CHEBI:46398"/>
        <dbReference type="ChEBI" id="CHEBI:57705"/>
        <dbReference type="ChEBI" id="CHEBI:57776"/>
        <dbReference type="EC" id="2.7.7.23"/>
    </reaction>
</comment>
<comment type="cofactor">
    <cofactor evidence="1">
        <name>Mg(2+)</name>
        <dbReference type="ChEBI" id="CHEBI:18420"/>
    </cofactor>
    <text evidence="1">Binds 1 Mg(2+) ion per subunit.</text>
</comment>
<comment type="pathway">
    <text evidence="1">Nucleotide-sugar biosynthesis; UDP-N-acetyl-alpha-D-glucosamine biosynthesis; N-acetyl-alpha-D-glucosamine 1-phosphate from alpha-D-glucosamine 6-phosphate (route II): step 2/2.</text>
</comment>
<comment type="pathway">
    <text evidence="1">Nucleotide-sugar biosynthesis; UDP-N-acetyl-alpha-D-glucosamine biosynthesis; UDP-N-acetyl-alpha-D-glucosamine from N-acetyl-alpha-D-glucosamine 1-phosphate: step 1/1.</text>
</comment>
<comment type="pathway">
    <text evidence="1">Bacterial outer membrane biogenesis; LPS lipid A biosynthesis.</text>
</comment>
<comment type="subunit">
    <text evidence="1">Homotrimer.</text>
</comment>
<comment type="subcellular location">
    <subcellularLocation>
        <location evidence="1">Cytoplasm</location>
    </subcellularLocation>
</comment>
<comment type="similarity">
    <text evidence="1">In the N-terminal section; belongs to the N-acetylglucosamine-1-phosphate uridyltransferase family.</text>
</comment>
<comment type="similarity">
    <text evidence="1">In the C-terminal section; belongs to the transferase hexapeptide repeat family.</text>
</comment>
<keyword id="KW-0012">Acyltransferase</keyword>
<keyword id="KW-0133">Cell shape</keyword>
<keyword id="KW-0961">Cell wall biogenesis/degradation</keyword>
<keyword id="KW-0963">Cytoplasm</keyword>
<keyword id="KW-0460">Magnesium</keyword>
<keyword id="KW-0479">Metal-binding</keyword>
<keyword id="KW-0511">Multifunctional enzyme</keyword>
<keyword id="KW-0548">Nucleotidyltransferase</keyword>
<keyword id="KW-0573">Peptidoglycan synthesis</keyword>
<keyword id="KW-1185">Reference proteome</keyword>
<keyword id="KW-0677">Repeat</keyword>
<keyword id="KW-0808">Transferase</keyword>
<proteinExistence type="inferred from homology"/>
<reference key="1">
    <citation type="journal article" date="2003" name="Nucleic Acids Res.">
        <title>The complete genome sequence and analysis of Corynebacterium diphtheriae NCTC13129.</title>
        <authorList>
            <person name="Cerdeno-Tarraga A.-M."/>
            <person name="Efstratiou A."/>
            <person name="Dover L.G."/>
            <person name="Holden M.T.G."/>
            <person name="Pallen M.J."/>
            <person name="Bentley S.D."/>
            <person name="Besra G.S."/>
            <person name="Churcher C.M."/>
            <person name="James K.D."/>
            <person name="De Zoysa A."/>
            <person name="Chillingworth T."/>
            <person name="Cronin A."/>
            <person name="Dowd L."/>
            <person name="Feltwell T."/>
            <person name="Hamlin N."/>
            <person name="Holroyd S."/>
            <person name="Jagels K."/>
            <person name="Moule S."/>
            <person name="Quail M.A."/>
            <person name="Rabbinowitsch E."/>
            <person name="Rutherford K.M."/>
            <person name="Thomson N.R."/>
            <person name="Unwin L."/>
            <person name="Whitehead S."/>
            <person name="Barrell B.G."/>
            <person name="Parkhill J."/>
        </authorList>
    </citation>
    <scope>NUCLEOTIDE SEQUENCE [LARGE SCALE GENOMIC DNA]</scope>
    <source>
        <strain>ATCC 700971 / NCTC 13129 / Biotype gravis</strain>
    </source>
</reference>
<sequence>MSNPHSSAVIVLAAGAGTRMKSAKQKTLHSIGGRSLLAHSLHAAAGLSPQRIVAVIGHRREQVRPEVEAVAATVDCEISVAIQEQQNGTGHAVQCAMHELEGFEGTVVVTNGDVPLLRSETLRSLVDAHTAVPTAVTVLTMSLSDPTGYGRIVRNDEGEVTAIVEQKDGDEETLKITEVNSGVFAFDAAILRSSLGKLDSNNAQGELYLTDVLSIARTEGHPVRAYRAHDHRELAGVNDRVQLAQAGKILNQRLVEDAMRNGATIVDPDTTWIDSEVTIGRDVIIHPSTQLLGKTSIADNCVIGPDTTLTNMVIDEDAHVIRTHGFDSRIGAHANIGPFTYIRPGTVVGENGKLGGFVEAKNAQIGRGSKVPHLTYIGDATVGEESNIGASSVFVNYDGVNKHHTTIGSHVRTGSDTMFIAPVTVGDGAYSGAGTVIKEDVPAGALVVSGGKQRNIEGWVEKNRPGTPAADAARQAHAHETKEG</sequence>
<dbReference type="EC" id="2.7.7.23" evidence="1"/>
<dbReference type="EC" id="2.3.1.157" evidence="1"/>
<dbReference type="EMBL" id="BX248356">
    <property type="protein sequence ID" value="CAE49420.1"/>
    <property type="molecule type" value="Genomic_DNA"/>
</dbReference>
<dbReference type="SMR" id="Q6NI74"/>
<dbReference type="STRING" id="257309.DIP0904"/>
<dbReference type="KEGG" id="cdi:DIP0904"/>
<dbReference type="HOGENOM" id="CLU_029499_15_2_11"/>
<dbReference type="UniPathway" id="UPA00113">
    <property type="reaction ID" value="UER00532"/>
</dbReference>
<dbReference type="UniPathway" id="UPA00113">
    <property type="reaction ID" value="UER00533"/>
</dbReference>
<dbReference type="UniPathway" id="UPA00973"/>
<dbReference type="Proteomes" id="UP000002198">
    <property type="component" value="Chromosome"/>
</dbReference>
<dbReference type="GO" id="GO:0005737">
    <property type="term" value="C:cytoplasm"/>
    <property type="evidence" value="ECO:0007669"/>
    <property type="project" value="UniProtKB-SubCell"/>
</dbReference>
<dbReference type="GO" id="GO:0016020">
    <property type="term" value="C:membrane"/>
    <property type="evidence" value="ECO:0007669"/>
    <property type="project" value="GOC"/>
</dbReference>
<dbReference type="GO" id="GO:0019134">
    <property type="term" value="F:glucosamine-1-phosphate N-acetyltransferase activity"/>
    <property type="evidence" value="ECO:0007669"/>
    <property type="project" value="UniProtKB-UniRule"/>
</dbReference>
<dbReference type="GO" id="GO:0000287">
    <property type="term" value="F:magnesium ion binding"/>
    <property type="evidence" value="ECO:0007669"/>
    <property type="project" value="UniProtKB-UniRule"/>
</dbReference>
<dbReference type="GO" id="GO:0003977">
    <property type="term" value="F:UDP-N-acetylglucosamine diphosphorylase activity"/>
    <property type="evidence" value="ECO:0007669"/>
    <property type="project" value="UniProtKB-UniRule"/>
</dbReference>
<dbReference type="GO" id="GO:0000902">
    <property type="term" value="P:cell morphogenesis"/>
    <property type="evidence" value="ECO:0007669"/>
    <property type="project" value="UniProtKB-UniRule"/>
</dbReference>
<dbReference type="GO" id="GO:0071555">
    <property type="term" value="P:cell wall organization"/>
    <property type="evidence" value="ECO:0007669"/>
    <property type="project" value="UniProtKB-KW"/>
</dbReference>
<dbReference type="GO" id="GO:0009245">
    <property type="term" value="P:lipid A biosynthetic process"/>
    <property type="evidence" value="ECO:0007669"/>
    <property type="project" value="UniProtKB-UniRule"/>
</dbReference>
<dbReference type="GO" id="GO:0009252">
    <property type="term" value="P:peptidoglycan biosynthetic process"/>
    <property type="evidence" value="ECO:0007669"/>
    <property type="project" value="UniProtKB-UniRule"/>
</dbReference>
<dbReference type="GO" id="GO:0008360">
    <property type="term" value="P:regulation of cell shape"/>
    <property type="evidence" value="ECO:0007669"/>
    <property type="project" value="UniProtKB-KW"/>
</dbReference>
<dbReference type="GO" id="GO:0006048">
    <property type="term" value="P:UDP-N-acetylglucosamine biosynthetic process"/>
    <property type="evidence" value="ECO:0007669"/>
    <property type="project" value="UniProtKB-UniPathway"/>
</dbReference>
<dbReference type="CDD" id="cd02540">
    <property type="entry name" value="GT2_GlmU_N_bac"/>
    <property type="match status" value="1"/>
</dbReference>
<dbReference type="CDD" id="cd03353">
    <property type="entry name" value="LbH_GlmU_C"/>
    <property type="match status" value="1"/>
</dbReference>
<dbReference type="Gene3D" id="2.160.10.10">
    <property type="entry name" value="Hexapeptide repeat proteins"/>
    <property type="match status" value="1"/>
</dbReference>
<dbReference type="Gene3D" id="3.90.550.10">
    <property type="entry name" value="Spore Coat Polysaccharide Biosynthesis Protein SpsA, Chain A"/>
    <property type="match status" value="1"/>
</dbReference>
<dbReference type="HAMAP" id="MF_01631">
    <property type="entry name" value="GlmU"/>
    <property type="match status" value="1"/>
</dbReference>
<dbReference type="InterPro" id="IPR005882">
    <property type="entry name" value="Bifunctional_GlmU"/>
</dbReference>
<dbReference type="InterPro" id="IPR050065">
    <property type="entry name" value="GlmU-like"/>
</dbReference>
<dbReference type="InterPro" id="IPR038009">
    <property type="entry name" value="GlmU_C_LbH"/>
</dbReference>
<dbReference type="InterPro" id="IPR001451">
    <property type="entry name" value="Hexapep"/>
</dbReference>
<dbReference type="InterPro" id="IPR025877">
    <property type="entry name" value="MobA-like_NTP_Trfase"/>
</dbReference>
<dbReference type="InterPro" id="IPR029044">
    <property type="entry name" value="Nucleotide-diphossugar_trans"/>
</dbReference>
<dbReference type="InterPro" id="IPR011004">
    <property type="entry name" value="Trimer_LpxA-like_sf"/>
</dbReference>
<dbReference type="NCBIfam" id="TIGR01173">
    <property type="entry name" value="glmU"/>
    <property type="match status" value="1"/>
</dbReference>
<dbReference type="NCBIfam" id="NF010932">
    <property type="entry name" value="PRK14352.1"/>
    <property type="match status" value="1"/>
</dbReference>
<dbReference type="PANTHER" id="PTHR43584:SF3">
    <property type="entry name" value="BIFUNCTIONAL PROTEIN GLMU"/>
    <property type="match status" value="1"/>
</dbReference>
<dbReference type="PANTHER" id="PTHR43584">
    <property type="entry name" value="NUCLEOTIDYL TRANSFERASE"/>
    <property type="match status" value="1"/>
</dbReference>
<dbReference type="Pfam" id="PF00132">
    <property type="entry name" value="Hexapep"/>
    <property type="match status" value="1"/>
</dbReference>
<dbReference type="Pfam" id="PF12804">
    <property type="entry name" value="NTP_transf_3"/>
    <property type="match status" value="1"/>
</dbReference>
<dbReference type="SUPFAM" id="SSF53448">
    <property type="entry name" value="Nucleotide-diphospho-sugar transferases"/>
    <property type="match status" value="1"/>
</dbReference>
<dbReference type="SUPFAM" id="SSF51161">
    <property type="entry name" value="Trimeric LpxA-like enzymes"/>
    <property type="match status" value="1"/>
</dbReference>
<protein>
    <recommendedName>
        <fullName evidence="1">Bifunctional protein GlmU</fullName>
    </recommendedName>
    <domain>
        <recommendedName>
            <fullName evidence="1">UDP-N-acetylglucosamine pyrophosphorylase</fullName>
            <ecNumber evidence="1">2.7.7.23</ecNumber>
        </recommendedName>
        <alternativeName>
            <fullName evidence="1">N-acetylglucosamine-1-phosphate uridyltransferase</fullName>
        </alternativeName>
    </domain>
    <domain>
        <recommendedName>
            <fullName evidence="1">Glucosamine-1-phosphate N-acetyltransferase</fullName>
            <ecNumber evidence="1">2.3.1.157</ecNumber>
        </recommendedName>
    </domain>
</protein>
<gene>
    <name evidence="1" type="primary">glmU</name>
    <name type="ordered locus">DIP0904</name>
</gene>
<organism>
    <name type="scientific">Corynebacterium diphtheriae (strain ATCC 700971 / NCTC 13129 / Biotype gravis)</name>
    <dbReference type="NCBI Taxonomy" id="257309"/>
    <lineage>
        <taxon>Bacteria</taxon>
        <taxon>Bacillati</taxon>
        <taxon>Actinomycetota</taxon>
        <taxon>Actinomycetes</taxon>
        <taxon>Mycobacteriales</taxon>
        <taxon>Corynebacteriaceae</taxon>
        <taxon>Corynebacterium</taxon>
    </lineage>
</organism>
<accession>Q6NI74</accession>
<evidence type="ECO:0000255" key="1">
    <source>
        <dbReference type="HAMAP-Rule" id="MF_01631"/>
    </source>
</evidence>
<evidence type="ECO:0000256" key="2">
    <source>
        <dbReference type="SAM" id="MobiDB-lite"/>
    </source>
</evidence>
<name>GLMU_CORDI</name>
<feature type="chain" id="PRO_0000233760" description="Bifunctional protein GlmU">
    <location>
        <begin position="1"/>
        <end position="484"/>
    </location>
</feature>
<feature type="region of interest" description="Pyrophosphorylase" evidence="1">
    <location>
        <begin position="1"/>
        <end position="240"/>
    </location>
</feature>
<feature type="region of interest" description="Linker" evidence="1">
    <location>
        <begin position="241"/>
        <end position="261"/>
    </location>
</feature>
<feature type="region of interest" description="N-acetyltransferase" evidence="1">
    <location>
        <begin position="262"/>
        <end position="484"/>
    </location>
</feature>
<feature type="region of interest" description="Disordered" evidence="2">
    <location>
        <begin position="461"/>
        <end position="484"/>
    </location>
</feature>
<feature type="active site" description="Proton acceptor" evidence="1">
    <location>
        <position position="373"/>
    </location>
</feature>
<feature type="binding site" evidence="1">
    <location>
        <begin position="12"/>
        <end position="15"/>
    </location>
    <ligand>
        <name>UDP-N-acetyl-alpha-D-glucosamine</name>
        <dbReference type="ChEBI" id="CHEBI:57705"/>
    </ligand>
</feature>
<feature type="binding site" evidence="1">
    <location>
        <position position="26"/>
    </location>
    <ligand>
        <name>UDP-N-acetyl-alpha-D-glucosamine</name>
        <dbReference type="ChEBI" id="CHEBI:57705"/>
    </ligand>
</feature>
<feature type="binding site" evidence="1">
    <location>
        <position position="83"/>
    </location>
    <ligand>
        <name>UDP-N-acetyl-alpha-D-glucosamine</name>
        <dbReference type="ChEBI" id="CHEBI:57705"/>
    </ligand>
</feature>
<feature type="binding site" evidence="1">
    <location>
        <begin position="88"/>
        <end position="89"/>
    </location>
    <ligand>
        <name>UDP-N-acetyl-alpha-D-glucosamine</name>
        <dbReference type="ChEBI" id="CHEBI:57705"/>
    </ligand>
</feature>
<feature type="binding site" evidence="1">
    <location>
        <position position="113"/>
    </location>
    <ligand>
        <name>Mg(2+)</name>
        <dbReference type="ChEBI" id="CHEBI:18420"/>
    </ligand>
</feature>
<feature type="binding site" evidence="1">
    <location>
        <position position="150"/>
    </location>
    <ligand>
        <name>UDP-N-acetyl-alpha-D-glucosamine</name>
        <dbReference type="ChEBI" id="CHEBI:57705"/>
    </ligand>
</feature>
<feature type="binding site" evidence="1">
    <location>
        <position position="165"/>
    </location>
    <ligand>
        <name>UDP-N-acetyl-alpha-D-glucosamine</name>
        <dbReference type="ChEBI" id="CHEBI:57705"/>
    </ligand>
</feature>
<feature type="binding site" evidence="1">
    <location>
        <position position="180"/>
    </location>
    <ligand>
        <name>UDP-N-acetyl-alpha-D-glucosamine</name>
        <dbReference type="ChEBI" id="CHEBI:57705"/>
    </ligand>
</feature>
<feature type="binding site" evidence="1">
    <location>
        <position position="238"/>
    </location>
    <ligand>
        <name>Mg(2+)</name>
        <dbReference type="ChEBI" id="CHEBI:18420"/>
    </ligand>
</feature>
<feature type="binding site" evidence="1">
    <location>
        <position position="238"/>
    </location>
    <ligand>
        <name>UDP-N-acetyl-alpha-D-glucosamine</name>
        <dbReference type="ChEBI" id="CHEBI:57705"/>
    </ligand>
</feature>
<feature type="binding site" evidence="1">
    <location>
        <position position="343"/>
    </location>
    <ligand>
        <name>UDP-N-acetyl-alpha-D-glucosamine</name>
        <dbReference type="ChEBI" id="CHEBI:57705"/>
    </ligand>
</feature>
<feature type="binding site" evidence="1">
    <location>
        <position position="361"/>
    </location>
    <ligand>
        <name>UDP-N-acetyl-alpha-D-glucosamine</name>
        <dbReference type="ChEBI" id="CHEBI:57705"/>
    </ligand>
</feature>
<feature type="binding site" evidence="1">
    <location>
        <position position="376"/>
    </location>
    <ligand>
        <name>UDP-N-acetyl-alpha-D-glucosamine</name>
        <dbReference type="ChEBI" id="CHEBI:57705"/>
    </ligand>
</feature>
<feature type="binding site" evidence="1">
    <location>
        <position position="387"/>
    </location>
    <ligand>
        <name>UDP-N-acetyl-alpha-D-glucosamine</name>
        <dbReference type="ChEBI" id="CHEBI:57705"/>
    </ligand>
</feature>
<feature type="binding site" evidence="1">
    <location>
        <position position="390"/>
    </location>
    <ligand>
        <name>acetyl-CoA</name>
        <dbReference type="ChEBI" id="CHEBI:57288"/>
    </ligand>
</feature>
<feature type="binding site" evidence="1">
    <location>
        <begin position="396"/>
        <end position="397"/>
    </location>
    <ligand>
        <name>acetyl-CoA</name>
        <dbReference type="ChEBI" id="CHEBI:57288"/>
    </ligand>
</feature>
<feature type="binding site" evidence="1">
    <location>
        <position position="415"/>
    </location>
    <ligand>
        <name>acetyl-CoA</name>
        <dbReference type="ChEBI" id="CHEBI:57288"/>
    </ligand>
</feature>
<feature type="binding site" evidence="1">
    <location>
        <position position="433"/>
    </location>
    <ligand>
        <name>acetyl-CoA</name>
        <dbReference type="ChEBI" id="CHEBI:57288"/>
    </ligand>
</feature>